<accession>Q15334</accession>
<accession>A7MBM7</accession>
<accession>O00188</accession>
<accession>Q58F11</accession>
<accession>Q86UK6</accession>
<protein>
    <recommendedName>
        <fullName>Lethal(2) giant larvae protein homolog 1</fullName>
        <shortName>LLGL</shortName>
    </recommendedName>
    <alternativeName>
        <fullName>DLG4</fullName>
    </alternativeName>
    <alternativeName>
        <fullName>Hugl-1</fullName>
    </alternativeName>
    <alternativeName>
        <fullName>Human homolog to the D-lgl gene protein</fullName>
    </alternativeName>
</protein>
<sequence>MMKFRFRRQGADPQREKLKQELFAFNKTVEHGFPNQPSALAFDPELRIMAIGTRSGAVKIYGAPGVEFTGLHRDAATVTQMHFLTGQGRLLSLLDDSSLHLWEIVHHNGCAHLEEALSFQLPSRPGFDGASAPLSLTRVTVVLLVAASDIAALGTEGSSVFFLDVTTLTLLEGQTLAPGEVLRSVPDDYRCGKALGPVESLQGHLRDPTKILIGYSRGLLVIWNQASQCVDHIFLGNQQLESLCWGRDSSTVVSSHSDGSYAVWSVDAGSFPTLQPTVATTPYGPFPCKAINKILWRNCESGGHFIIFSGGMPRASYGDRHCVSVLRAETLVTLDFTSRIIDFFTVHSTRPEDEFDDPQALAVLLEEELVVLDLQTPGWPAVPAPYLAPLHSSAITCSAHVASVPAKLWARIVSAGEQQSPQPVSSALSWPITGGRNLAQEPSQRGLLLTGHEDGTVRFWDASGVALRPLYKLSTAGLFQTDCEHADSLAQAAEDDWPPFRKVGCFDPYSDDPRLGVQKVALCKYTAQMVVAGTAGQVLVLELSDVPVEQAVSVAIIDLLQDREGFTWKGHERLSPRTGPLPWPAGFQPRVLVQCLPPAAVTAVTLHTEWSLVAFGTSHGFGLFDYQRKSPVLARCTLHPNDSLAMEGPLSRVKSLKKSLRQSFRRIRKSRVSGKKRAANASSKLQEANAQLAEQACPHDVEMTPVQRRIEPRSADDSLSGVVRCLYFADTFLRDGAHHGPTMWAGTNSGSVFAYALEVPAAAVGGEKRPEQAVEAVLGKEVQLMHRAPVVAIAVLDGRGRPLPEPYEASRDLAQAPDMQGGHAVLIASEEQFKVFTLPKVSAKTKFKLTAHEGCRVRKVALATFASVACEDYAETCLACLTNLGDVHVFSVPGLRPQVHYSCIRKEDISGIASCVFTRHGQGFYLISPSEFERFSLSARNITEPLCSLDINWPRDATQASYRIRESPKLSQANGTPSILLAPQSLDGSPDPAHSMGPDTPEPPEAALSPMSIDSATSADTTLDTTGDVTVEDVKDFLGSSEESEKNLRNLAEDEAHACAILIK</sequence>
<feature type="chain" id="PRO_0000232725" description="Lethal(2) giant larvae protein homolog 1">
    <location>
        <begin position="1"/>
        <end position="1064"/>
    </location>
</feature>
<feature type="repeat" description="WD 1">
    <location>
        <begin position="38"/>
        <end position="71"/>
    </location>
</feature>
<feature type="repeat" description="WD 2">
    <location>
        <begin position="78"/>
        <end position="119"/>
    </location>
</feature>
<feature type="repeat" description="WD 3">
    <location>
        <begin position="139"/>
        <end position="176"/>
    </location>
</feature>
<feature type="repeat" description="WD 4">
    <location>
        <begin position="200"/>
        <end position="234"/>
    </location>
</feature>
<feature type="repeat" description="WD 5">
    <location>
        <begin position="240"/>
        <end position="272"/>
    </location>
</feature>
<feature type="repeat" description="WD 6">
    <location>
        <begin position="290"/>
        <end position="332"/>
    </location>
</feature>
<feature type="repeat" description="WD 7">
    <location>
        <begin position="340"/>
        <end position="374"/>
    </location>
</feature>
<feature type="repeat" description="WD 8">
    <location>
        <begin position="396"/>
        <end position="474"/>
    </location>
</feature>
<feature type="repeat" description="WD 9">
    <location>
        <begin position="518"/>
        <end position="593"/>
    </location>
</feature>
<feature type="repeat" description="WD 10">
    <location>
        <begin position="602"/>
        <end position="663"/>
    </location>
</feature>
<feature type="repeat" description="WD 11">
    <location>
        <begin position="723"/>
        <end position="783"/>
    </location>
</feature>
<feature type="repeat" description="WD 12">
    <location>
        <begin position="792"/>
        <end position="844"/>
    </location>
</feature>
<feature type="repeat" description="WD 13">
    <location>
        <begin position="849"/>
        <end position="902"/>
    </location>
</feature>
<feature type="repeat" description="WD 14">
    <location>
        <begin position="916"/>
        <end position="939"/>
    </location>
</feature>
<feature type="region of interest" description="Disordered" evidence="3">
    <location>
        <begin position="966"/>
        <end position="1010"/>
    </location>
</feature>
<feature type="modified residue" description="Phosphoserine" evidence="4">
    <location>
        <position position="663"/>
    </location>
</feature>
<feature type="modified residue" description="Phosphothreonine" evidence="2">
    <location>
        <position position="958"/>
    </location>
</feature>
<feature type="modified residue" description="Phosphoserine" evidence="2">
    <location>
        <position position="967"/>
    </location>
</feature>
<feature type="modified residue" description="Phosphoserine" evidence="2">
    <location>
        <position position="985"/>
    </location>
</feature>
<feature type="sequence variant" id="VAR_058710" description="In dbSNP:rs2290505." evidence="5 9 10">
    <original>S</original>
    <variation>G</variation>
    <location>
        <position position="148"/>
    </location>
</feature>
<feature type="sequence variant" id="VAR_058711" description="In dbSNP:rs1063683." evidence="9">
    <original>Q</original>
    <variation>H</variation>
    <location>
        <position position="550"/>
    </location>
</feature>
<feature type="sequence conflict" description="In Ref. 1; CAA60130." evidence="11" ref="1">
    <original>R</original>
    <variation>P</variation>
    <location>
        <position position="5"/>
    </location>
</feature>
<feature type="sequence conflict" description="In Ref. 2; BAA19516." evidence="11" ref="2">
    <original>A</original>
    <variation>G</variation>
    <location>
        <position position="152"/>
    </location>
</feature>
<feature type="sequence conflict" description="In Ref. 1; CAA60130." evidence="11" ref="1">
    <original>S</original>
    <variation>SS</variation>
    <location>
        <position position="159"/>
    </location>
</feature>
<feature type="sequence conflict" description="In Ref. 1; CAA60130." evidence="11" ref="1">
    <original>A</original>
    <variation>D</variation>
    <location>
        <position position="194"/>
    </location>
</feature>
<feature type="sequence conflict" description="In Ref. 1; CAA60130." evidence="11" ref="1">
    <original>R</original>
    <variation>Q</variation>
    <location>
        <position position="206"/>
    </location>
</feature>
<feature type="sequence conflict" description="In Ref. 2; BAA19516." evidence="11" ref="2">
    <original>S</original>
    <variation>D</variation>
    <location>
        <position position="216"/>
    </location>
</feature>
<feature type="sequence conflict" description="In Ref. 1; CAA60130." evidence="11" ref="1">
    <original>W</original>
    <variation>R</variation>
    <location>
        <position position="223"/>
    </location>
</feature>
<feature type="sequence conflict" description="In Ref. 2; BAA19516." evidence="11" ref="2">
    <original>AS</original>
    <variation>SR</variation>
    <location>
        <begin position="226"/>
        <end position="227"/>
    </location>
</feature>
<feature type="sequence conflict" description="In Ref. 1; CAA60130." evidence="11" ref="1">
    <original>TS</original>
    <variation>HF</variation>
    <location>
        <begin position="337"/>
        <end position="338"/>
    </location>
</feature>
<feature type="sequence conflict" description="In Ref. 2; BAA19516." evidence="11" ref="2">
    <original>H</original>
    <variation>Y</variation>
    <location>
        <position position="400"/>
    </location>
</feature>
<feature type="sequence conflict" description="In Ref. 1; CAA60130." evidence="11" ref="1">
    <original>A</original>
    <variation>S</variation>
    <location>
        <position position="486"/>
    </location>
</feature>
<feature type="sequence conflict" description="In Ref. 1; CAA60130." evidence="11" ref="1">
    <original>P</original>
    <variation>L</variation>
    <location>
        <position position="580"/>
    </location>
</feature>
<feature type="sequence conflict" description="In Ref. 2; BAA19516." evidence="11" ref="2">
    <original>Q</original>
    <variation>L</variation>
    <location>
        <position position="588"/>
    </location>
</feature>
<feature type="sequence conflict" description="In Ref. 1; CAA60130." evidence="11" ref="1">
    <original>R</original>
    <variation>C</variation>
    <location>
        <position position="590"/>
    </location>
</feature>
<feature type="sequence conflict" description="In Ref. 1; CAA60130." evidence="11" ref="1">
    <original>FDYQRK</original>
    <variation>L</variation>
    <location>
        <begin position="624"/>
        <end position="629"/>
    </location>
</feature>
<feature type="sequence conflict" description="In Ref. 2; BAA19516." evidence="11" ref="2">
    <original>Q</original>
    <variation>L</variation>
    <location>
        <position position="686"/>
    </location>
</feature>
<feature type="sequence conflict" description="In Ref. 2; BAA19516." evidence="11" ref="2">
    <original>EV</original>
    <variation>KE</variation>
    <location>
        <begin position="781"/>
        <end position="782"/>
    </location>
</feature>
<feature type="sequence conflict" description="In Ref. 1; CAA60130." evidence="11" ref="1">
    <original>V</original>
    <variation>L</variation>
    <location>
        <position position="782"/>
    </location>
</feature>
<feature type="sequence conflict" description="In Ref. 1; CAA60130." evidence="11" ref="1">
    <location>
        <position position="799"/>
    </location>
</feature>
<feature type="sequence conflict" description="In Ref. 1; CAA60130." evidence="11" ref="1">
    <original>D</original>
    <variation>H</variation>
    <location>
        <position position="818"/>
    </location>
</feature>
<feature type="sequence conflict" description="In Ref. 1; CAA60130." evidence="11" ref="1">
    <original>V</original>
    <variation>VV</variation>
    <location>
        <position position="860"/>
    </location>
</feature>
<feature type="sequence conflict" description="In Ref. 2; BAA19516." evidence="11" ref="2">
    <original>E</original>
    <variation>R</variation>
    <location>
        <position position="871"/>
    </location>
</feature>
<feature type="sequence conflict" description="In Ref. 2; BAA19516." evidence="11" ref="2">
    <location>
        <position position="894"/>
    </location>
</feature>
<feature type="sequence conflict" description="In Ref. 1; CAA60130." evidence="11" ref="1">
    <original>Q</original>
    <variation>E</variation>
    <location>
        <position position="898"/>
    </location>
</feature>
<feature type="sequence conflict" description="In Ref. 1; CAA60130." evidence="11" ref="1">
    <original>P</original>
    <variation>G</variation>
    <location>
        <position position="945"/>
    </location>
</feature>
<feature type="sequence conflict" description="In Ref. 1; CAA60130." evidence="11" ref="1">
    <original>AILIK</original>
    <variation>CI</variation>
    <location>
        <begin position="1060"/>
        <end position="1064"/>
    </location>
</feature>
<keyword id="KW-0002">3D-structure</keyword>
<keyword id="KW-0966">Cell projection</keyword>
<keyword id="KW-0963">Cytoplasm</keyword>
<keyword id="KW-0206">Cytoskeleton</keyword>
<keyword id="KW-0967">Endosome</keyword>
<keyword id="KW-0268">Exocytosis</keyword>
<keyword id="KW-0333">Golgi apparatus</keyword>
<keyword id="KW-0472">Membrane</keyword>
<keyword id="KW-0597">Phosphoprotein</keyword>
<keyword id="KW-1267">Proteomics identification</keyword>
<keyword id="KW-1185">Reference proteome</keyword>
<keyword id="KW-0677">Repeat</keyword>
<keyword id="KW-0853">WD repeat</keyword>
<reference key="1">
    <citation type="journal article" date="1995" name="Oncogene">
        <title>A human homologue of the Drosophila tumour suppressor gene l(2)gl maps to 17p11.2-12 and codes for a cytoskeletal protein that associates with nonmuscle myosin II heavy chain.</title>
        <authorList>
            <person name="Strand D.J."/>
            <person name="Unger S."/>
            <person name="Corvi R."/>
            <person name="Hartenstein K."/>
            <person name="Schenkel H."/>
            <person name="Kalmes A."/>
            <person name="Merdes G."/>
            <person name="Neumann B."/>
            <person name="Kreig-Schneider F."/>
            <person name="Coy J.F."/>
            <person name="Poustka A."/>
            <person name="Schwab M."/>
            <person name="Mechler B."/>
        </authorList>
    </citation>
    <scope>NUCLEOTIDE SEQUENCE [MRNA]</scope>
    <scope>SUBCELLULAR LOCATION</scope>
    <scope>TISSUE SPECIFICITY</scope>
    <scope>INTERACTION WITH MYOSIN II HEAVY CHAIN</scope>
    <scope>VARIANTS GLY-148 AND HIS-550</scope>
    <source>
        <tissue>Brain</tissue>
    </source>
</reference>
<reference key="2">
    <citation type="journal article" date="1996" name="Cytogenet. Cell Genet.">
        <title>The human homologue of the murine Llglh gene (LLGL) maps within the Smith-Magenis syndrome region in 17p11.2.</title>
        <authorList>
            <person name="Koyama K."/>
            <person name="Fukushima Y."/>
            <person name="Inazawa J."/>
            <person name="Tomotsune D."/>
            <person name="Takahashi N."/>
            <person name="Nakamura Y."/>
        </authorList>
    </citation>
    <scope>NUCLEOTIDE SEQUENCE [MRNA]</scope>
    <scope>VARIANT GLY-148</scope>
    <source>
        <tissue>Brain</tissue>
    </source>
</reference>
<reference key="3">
    <citation type="journal article" date="2004" name="Genome Res.">
        <title>The status, quality, and expansion of the NIH full-length cDNA project: the Mammalian Gene Collection (MGC).</title>
        <authorList>
            <consortium name="The MGC Project Team"/>
        </authorList>
    </citation>
    <scope>NUCLEOTIDE SEQUENCE [LARGE SCALE MRNA]</scope>
    <scope>VARIANT GLY-148</scope>
    <source>
        <tissue>Fetal brain</tissue>
    </source>
</reference>
<reference key="4">
    <citation type="journal article" date="2003" name="Curr. Biol.">
        <title>Mammalian Lgl forms a protein complex with PAR-6 and aPKC independently of PAR-3 to regulate epithelial cell polarity.</title>
        <authorList>
            <person name="Yamanaka T."/>
            <person name="Horikoshi Y."/>
            <person name="Sugiyama Y."/>
            <person name="Ishiyama C."/>
            <person name="Suzuki A."/>
            <person name="Hirose T."/>
            <person name="Iwamatsu A."/>
            <person name="Shinohara A."/>
            <person name="Ohno S."/>
        </authorList>
    </citation>
    <scope>INTERACTION WITH PARD6B/PAR-6 AND PRKCI/APKC</scope>
    <scope>SUBCELLULAR LOCATION</scope>
    <scope>PHOSPHORYLATION AT SER-663</scope>
</reference>
<reference key="5">
    <citation type="journal article" date="2005" name="Oncogene">
        <title>Reduced expression of Hugl-1, the human homologue of Drosophila tumour suppressor gene lgl, contributes to progression of colorectal cancer.</title>
        <authorList>
            <person name="Schimanski C.C."/>
            <person name="Schmitz G."/>
            <person name="Kashyap A."/>
            <person name="Bosserhoff A.K."/>
            <person name="Bataille F."/>
            <person name="Schafer S.C."/>
            <person name="Lehr H.A."/>
            <person name="Berger M.R."/>
            <person name="Galle P.R."/>
            <person name="Strand S."/>
            <person name="Strand D."/>
        </authorList>
    </citation>
    <scope>FUNCTION</scope>
    <scope>TISSUE SPECIFICITY</scope>
</reference>
<reference key="6">
    <citation type="journal article" date="2006" name="Oncogene">
        <title>Expression of Hugl-1 is strongly reduced in malignant melanoma.</title>
        <authorList>
            <person name="Kuphal S."/>
            <person name="Wallner S."/>
            <person name="Schimanski C.C."/>
            <person name="Bataille F."/>
            <person name="Hofer P."/>
            <person name="Strand S."/>
            <person name="Strand D."/>
            <person name="Bosserhoff A.K."/>
        </authorList>
    </citation>
    <scope>FUNCTION</scope>
    <scope>TISSUE SPECIFICITY</scope>
    <scope>INVOLVEMENT IN COLORECTAL CANCER AND MELANOMA</scope>
</reference>
<reference key="7">
    <citation type="journal article" date="2010" name="PLoS Biol.">
        <title>Involvement of Lgl and Mahjong/VprBP in cell competition.</title>
        <authorList>
            <person name="Tamori Y."/>
            <person name="Bialucha C.U."/>
            <person name="Tian A.G."/>
            <person name="Kajita M."/>
            <person name="Huang Y.C."/>
            <person name="Norman M."/>
            <person name="Harrison N."/>
            <person name="Poulton J."/>
            <person name="Ivanovitch K."/>
            <person name="Disch L."/>
            <person name="Liu T."/>
            <person name="Deng W.M."/>
            <person name="Fujita Y."/>
        </authorList>
    </citation>
    <scope>INTERACTION WITH DCAF1</scope>
</reference>
<reference key="8">
    <citation type="journal article" date="2011" name="Sci. Signal.">
        <title>System-wide temporal characterization of the proteome and phosphoproteome of human embryonic stem cell differentiation.</title>
        <authorList>
            <person name="Rigbolt K.T."/>
            <person name="Prokhorova T.A."/>
            <person name="Akimov V."/>
            <person name="Henningsen J."/>
            <person name="Johansen P.T."/>
            <person name="Kratchmarova I."/>
            <person name="Kassem M."/>
            <person name="Mann M."/>
            <person name="Olsen J.V."/>
            <person name="Blagoev B."/>
        </authorList>
    </citation>
    <scope>IDENTIFICATION BY MASS SPECTROMETRY [LARGE SCALE ANALYSIS]</scope>
</reference>
<proteinExistence type="evidence at protein level"/>
<comment type="function">
    <text evidence="6 7">Cortical cytoskeleton protein found in a complex involved in maintaining cell polarity and epithelial integrity. Involved in the regulation of mitotic spindle orientation, proliferation, differentiation and tissue organization of neuroepithelial cells. Involved in axonogenesis through RAB10 activation thereby regulating vesicular membrane trafficking toward the axonal plasma membrane.</text>
</comment>
<comment type="subunit">
    <text evidence="1 4 8 9">Associated with nonmuscle myosin II heavy chain. Interacts with PRKCI/aPKC, PARD6B/Par-6 and PARD6A. Interacts with STX4A (By similarity). Interacts with RAB10 (GDP-bound form); the interaction is direct and promotes RAB10 association with membranes and activation through competition with the Rab inhibitor GDI1 (By similarity). Interacts with DCAF1.</text>
</comment>
<comment type="subcellular location">
    <subcellularLocation>
        <location evidence="1">Early endosome membrane</location>
    </subcellularLocation>
    <subcellularLocation>
        <location evidence="1">Golgi apparatus</location>
        <location evidence="1">trans-Golgi network membrane</location>
    </subcellularLocation>
    <subcellularLocation>
        <location evidence="1">Golgi apparatus membrane</location>
    </subcellularLocation>
    <subcellularLocation>
        <location evidence="1">Cell projection</location>
        <location evidence="1">Axon</location>
    </subcellularLocation>
    <subcellularLocation>
        <location evidence="4 9">Cytoplasm</location>
        <location evidence="4 9">Cytoskeleton</location>
    </subcellularLocation>
    <text evidence="1">Localized to the lateral membrane during the polarization and formation cell-cell contacts. Enriched in developing axons (By similarity).</text>
</comment>
<comment type="tissue specificity">
    <text evidence="6 7 9">Expressed in brain, kidney, and muscle but is barely seen in heart and placenta. Down-regulated or lost in all cell lines and in most of the tumor samples analyzed. Loss was associated with advanced stage of the disease.</text>
</comment>
<comment type="PTM">
    <text evidence="4">Phosphorylated at least at Ser-663 by PRKCI.</text>
</comment>
<comment type="miscellaneous">
    <text>Down-regulation of LLGL1 is associated with the progression of colorectal cancer and melanoma. Located within the Smith-Magenis syndrome region on chromosome 17; deleted in patients with this syndrome.</text>
</comment>
<comment type="miscellaneous">
    <text>Expression increases cell adhesion and decreases cell migration. Substitutes for Drosophila l(2)gl tumor suppressor function in vivo.</text>
</comment>
<comment type="similarity">
    <text evidence="11">Belongs to the WD repeat L(2)GL family.</text>
</comment>
<comment type="sequence caution" evidence="11">
    <conflict type="frameshift">
        <sequence resource="EMBL-CDS" id="BAA19516"/>
    </conflict>
</comment>
<name>L2GL1_HUMAN</name>
<evidence type="ECO:0000250" key="1"/>
<evidence type="ECO:0000250" key="2">
    <source>
        <dbReference type="UniProtKB" id="Q80Y17"/>
    </source>
</evidence>
<evidence type="ECO:0000256" key="3">
    <source>
        <dbReference type="SAM" id="MobiDB-lite"/>
    </source>
</evidence>
<evidence type="ECO:0000269" key="4">
    <source>
    </source>
</evidence>
<evidence type="ECO:0000269" key="5">
    <source>
    </source>
</evidence>
<evidence type="ECO:0000269" key="6">
    <source>
    </source>
</evidence>
<evidence type="ECO:0000269" key="7">
    <source>
    </source>
</evidence>
<evidence type="ECO:0000269" key="8">
    <source>
    </source>
</evidence>
<evidence type="ECO:0000269" key="9">
    <source>
    </source>
</evidence>
<evidence type="ECO:0000269" key="10">
    <source>
    </source>
</evidence>
<evidence type="ECO:0000305" key="11"/>
<organism>
    <name type="scientific">Homo sapiens</name>
    <name type="common">Human</name>
    <dbReference type="NCBI Taxonomy" id="9606"/>
    <lineage>
        <taxon>Eukaryota</taxon>
        <taxon>Metazoa</taxon>
        <taxon>Chordata</taxon>
        <taxon>Craniata</taxon>
        <taxon>Vertebrata</taxon>
        <taxon>Euteleostomi</taxon>
        <taxon>Mammalia</taxon>
        <taxon>Eutheria</taxon>
        <taxon>Euarchontoglires</taxon>
        <taxon>Primates</taxon>
        <taxon>Haplorrhini</taxon>
        <taxon>Catarrhini</taxon>
        <taxon>Hominidae</taxon>
        <taxon>Homo</taxon>
    </lineage>
</organism>
<gene>
    <name type="primary">LLGL1</name>
    <name type="synonym">DLG4</name>
    <name type="synonym">HUGL</name>
    <name type="synonym">HUGL1</name>
</gene>
<dbReference type="EMBL" id="X86371">
    <property type="protein sequence ID" value="CAA60130.1"/>
    <property type="molecule type" value="mRNA"/>
</dbReference>
<dbReference type="EMBL" id="D50550">
    <property type="protein sequence ID" value="BAA19516.1"/>
    <property type="status" value="ALT_FRAME"/>
    <property type="molecule type" value="mRNA"/>
</dbReference>
<dbReference type="EMBL" id="BC028037">
    <property type="protein sequence ID" value="AAH28037.1"/>
    <property type="molecule type" value="mRNA"/>
</dbReference>
<dbReference type="EMBL" id="BC151838">
    <property type="protein sequence ID" value="AAI51839.1"/>
    <property type="molecule type" value="mRNA"/>
</dbReference>
<dbReference type="CCDS" id="CCDS32586.1"/>
<dbReference type="PIR" id="I38171">
    <property type="entry name" value="I38171"/>
</dbReference>
<dbReference type="RefSeq" id="NP_004131.3">
    <property type="nucleotide sequence ID" value="NM_004140.3"/>
</dbReference>
<dbReference type="PDB" id="8R3Y">
    <property type="method" value="EM"/>
    <property type="resolution" value="3.68 A"/>
    <property type="chains" value="L=15-951"/>
</dbReference>
<dbReference type="PDBsum" id="8R3Y"/>
<dbReference type="EMDB" id="EMD-18877"/>
<dbReference type="SMR" id="Q15334"/>
<dbReference type="BioGRID" id="110183">
    <property type="interactions" value="172"/>
</dbReference>
<dbReference type="ComplexPortal" id="CPX-6188">
    <property type="entry name" value="Scribble cell polarity complex, DLG5-LLGL1-SCRIB variant"/>
</dbReference>
<dbReference type="ComplexPortal" id="CPX-6189">
    <property type="entry name" value="Scribble cell polarity complex, DLG4-LLGL1-SCRIB variant"/>
</dbReference>
<dbReference type="ComplexPortal" id="CPX-6190">
    <property type="entry name" value="Scribble cell polarity complex, DLG3-LLGL1-SCRIB variant"/>
</dbReference>
<dbReference type="ComplexPortal" id="CPX-6191">
    <property type="entry name" value="Scribble cell polarity complex, DLG2-LLGL1-SCRIB variant"/>
</dbReference>
<dbReference type="ComplexPortal" id="CPX-6192">
    <property type="entry name" value="Scribble cell polarity complex, DLG1-LLGL1-SCRIB variant"/>
</dbReference>
<dbReference type="CORUM" id="Q15334"/>
<dbReference type="FunCoup" id="Q15334">
    <property type="interactions" value="1363"/>
</dbReference>
<dbReference type="IntAct" id="Q15334">
    <property type="interactions" value="69"/>
</dbReference>
<dbReference type="MINT" id="Q15334"/>
<dbReference type="STRING" id="9606.ENSP00000321537"/>
<dbReference type="GlyCosmos" id="Q15334">
    <property type="glycosylation" value="1 site, 2 glycans"/>
</dbReference>
<dbReference type="GlyGen" id="Q15334">
    <property type="glycosylation" value="1 site, 2 O-linked glycans (1 site)"/>
</dbReference>
<dbReference type="iPTMnet" id="Q15334"/>
<dbReference type="PhosphoSitePlus" id="Q15334"/>
<dbReference type="SwissPalm" id="Q15334"/>
<dbReference type="BioMuta" id="LLGL1"/>
<dbReference type="DMDM" id="259016343"/>
<dbReference type="jPOST" id="Q15334"/>
<dbReference type="MassIVE" id="Q15334"/>
<dbReference type="PaxDb" id="9606-ENSP00000321537"/>
<dbReference type="PeptideAtlas" id="Q15334"/>
<dbReference type="ProteomicsDB" id="60533"/>
<dbReference type="Pumba" id="Q15334"/>
<dbReference type="Antibodypedia" id="13463">
    <property type="antibodies" value="182 antibodies from 26 providers"/>
</dbReference>
<dbReference type="DNASU" id="3996"/>
<dbReference type="Ensembl" id="ENST00000316843.9">
    <property type="protein sequence ID" value="ENSP00000321537.4"/>
    <property type="gene ID" value="ENSG00000131899.13"/>
</dbReference>
<dbReference type="GeneID" id="3996"/>
<dbReference type="KEGG" id="hsa:3996"/>
<dbReference type="MANE-Select" id="ENST00000316843.9">
    <property type="protein sequence ID" value="ENSP00000321537.4"/>
    <property type="RefSeq nucleotide sequence ID" value="NM_004140.4"/>
    <property type="RefSeq protein sequence ID" value="NP_004131.4"/>
</dbReference>
<dbReference type="UCSC" id="uc002gsp.4">
    <property type="organism name" value="human"/>
</dbReference>
<dbReference type="AGR" id="HGNC:6628"/>
<dbReference type="CTD" id="3996"/>
<dbReference type="DisGeNET" id="3996"/>
<dbReference type="GeneCards" id="LLGL1"/>
<dbReference type="HGNC" id="HGNC:6628">
    <property type="gene designation" value="LLGL1"/>
</dbReference>
<dbReference type="HPA" id="ENSG00000131899">
    <property type="expression patterns" value="Tissue enriched (brain)"/>
</dbReference>
<dbReference type="MalaCards" id="LLGL1"/>
<dbReference type="MIM" id="600966">
    <property type="type" value="gene"/>
</dbReference>
<dbReference type="neXtProt" id="NX_Q15334"/>
<dbReference type="OpenTargets" id="ENSG00000131899"/>
<dbReference type="PharmGKB" id="PA30396"/>
<dbReference type="VEuPathDB" id="HostDB:ENSG00000131899"/>
<dbReference type="eggNOG" id="KOG1983">
    <property type="taxonomic scope" value="Eukaryota"/>
</dbReference>
<dbReference type="GeneTree" id="ENSGT00950000182906"/>
<dbReference type="HOGENOM" id="CLU_005214_0_0_1"/>
<dbReference type="InParanoid" id="Q15334"/>
<dbReference type="OMA" id="WRNCASG"/>
<dbReference type="OrthoDB" id="19944at2759"/>
<dbReference type="PAN-GO" id="Q15334">
    <property type="GO annotations" value="10 GO annotations based on evolutionary models"/>
</dbReference>
<dbReference type="PhylomeDB" id="Q15334"/>
<dbReference type="TreeFam" id="TF314585"/>
<dbReference type="PathwayCommons" id="Q15334"/>
<dbReference type="SignaLink" id="Q15334"/>
<dbReference type="SIGNOR" id="Q15334"/>
<dbReference type="BioGRID-ORCS" id="3996">
    <property type="hits" value="19 hits in 1160 CRISPR screens"/>
</dbReference>
<dbReference type="CD-CODE" id="FB4E32DD">
    <property type="entry name" value="Presynaptic clusters and postsynaptic densities"/>
</dbReference>
<dbReference type="ChiTaRS" id="LLGL1">
    <property type="organism name" value="human"/>
</dbReference>
<dbReference type="GeneWiki" id="LLGL1"/>
<dbReference type="GenomeRNAi" id="3996"/>
<dbReference type="Pharos" id="Q15334">
    <property type="development level" value="Tbio"/>
</dbReference>
<dbReference type="PRO" id="PR:Q15334"/>
<dbReference type="Proteomes" id="UP000005640">
    <property type="component" value="Chromosome 17"/>
</dbReference>
<dbReference type="RNAct" id="Q15334">
    <property type="molecule type" value="protein"/>
</dbReference>
<dbReference type="Bgee" id="ENSG00000131899">
    <property type="expression patterns" value="Expressed in C1 segment of cervical spinal cord and 94 other cell types or tissues"/>
</dbReference>
<dbReference type="ExpressionAtlas" id="Q15334">
    <property type="expression patterns" value="baseline and differential"/>
</dbReference>
<dbReference type="GO" id="GO:0005912">
    <property type="term" value="C:adherens junction"/>
    <property type="evidence" value="ECO:0000303"/>
    <property type="project" value="ComplexPortal"/>
</dbReference>
<dbReference type="GO" id="GO:0030424">
    <property type="term" value="C:axon"/>
    <property type="evidence" value="ECO:0007669"/>
    <property type="project" value="UniProtKB-SubCell"/>
</dbReference>
<dbReference type="GO" id="GO:0030864">
    <property type="term" value="C:cortical actin cytoskeleton"/>
    <property type="evidence" value="ECO:0000314"/>
    <property type="project" value="UniProtKB"/>
</dbReference>
<dbReference type="GO" id="GO:0005737">
    <property type="term" value="C:cytoplasm"/>
    <property type="evidence" value="ECO:0000314"/>
    <property type="project" value="UniProtKB"/>
</dbReference>
<dbReference type="GO" id="GO:0005856">
    <property type="term" value="C:cytoskeleton"/>
    <property type="evidence" value="ECO:0000304"/>
    <property type="project" value="ProtInc"/>
</dbReference>
<dbReference type="GO" id="GO:0031901">
    <property type="term" value="C:early endosome membrane"/>
    <property type="evidence" value="ECO:0000250"/>
    <property type="project" value="UniProtKB"/>
</dbReference>
<dbReference type="GO" id="GO:0000137">
    <property type="term" value="C:Golgi cis cisterna"/>
    <property type="evidence" value="ECO:0000250"/>
    <property type="project" value="UniProtKB"/>
</dbReference>
<dbReference type="GO" id="GO:0000139">
    <property type="term" value="C:Golgi membrane"/>
    <property type="evidence" value="ECO:0007669"/>
    <property type="project" value="UniProtKB-SubCell"/>
</dbReference>
<dbReference type="GO" id="GO:0005886">
    <property type="term" value="C:plasma membrane"/>
    <property type="evidence" value="ECO:0000318"/>
    <property type="project" value="GO_Central"/>
</dbReference>
<dbReference type="GO" id="GO:0032588">
    <property type="term" value="C:trans-Golgi network membrane"/>
    <property type="evidence" value="ECO:0000250"/>
    <property type="project" value="UniProtKB"/>
</dbReference>
<dbReference type="GO" id="GO:0005096">
    <property type="term" value="F:GTPase activator activity"/>
    <property type="evidence" value="ECO:0000250"/>
    <property type="project" value="UniProtKB"/>
</dbReference>
<dbReference type="GO" id="GO:0045159">
    <property type="term" value="F:myosin II binding"/>
    <property type="evidence" value="ECO:0000318"/>
    <property type="project" value="GO_Central"/>
</dbReference>
<dbReference type="GO" id="GO:0019901">
    <property type="term" value="F:protein kinase binding"/>
    <property type="evidence" value="ECO:0000314"/>
    <property type="project" value="UniProtKB"/>
</dbReference>
<dbReference type="GO" id="GO:0005198">
    <property type="term" value="F:structural molecule activity"/>
    <property type="evidence" value="ECO:0000304"/>
    <property type="project" value="ProtInc"/>
</dbReference>
<dbReference type="GO" id="GO:0007409">
    <property type="term" value="P:axonogenesis"/>
    <property type="evidence" value="ECO:0000250"/>
    <property type="project" value="UniProtKB"/>
</dbReference>
<dbReference type="GO" id="GO:0030866">
    <property type="term" value="P:cortical actin cytoskeleton organization"/>
    <property type="evidence" value="ECO:0000314"/>
    <property type="project" value="UniProtKB"/>
</dbReference>
<dbReference type="GO" id="GO:0051294">
    <property type="term" value="P:establishment of spindle orientation"/>
    <property type="evidence" value="ECO:0000318"/>
    <property type="project" value="GO_Central"/>
</dbReference>
<dbReference type="GO" id="GO:0045197">
    <property type="term" value="P:establishment or maintenance of epithelial cell apical/basal polarity"/>
    <property type="evidence" value="ECO:0000303"/>
    <property type="project" value="ComplexPortal"/>
</dbReference>
<dbReference type="GO" id="GO:0006887">
    <property type="term" value="P:exocytosis"/>
    <property type="evidence" value="ECO:0007669"/>
    <property type="project" value="UniProtKB-KW"/>
</dbReference>
<dbReference type="GO" id="GO:0006893">
    <property type="term" value="P:Golgi to plasma membrane transport"/>
    <property type="evidence" value="ECO:0000250"/>
    <property type="project" value="UniProtKB"/>
</dbReference>
<dbReference type="GO" id="GO:0065003">
    <property type="term" value="P:protein-containing complex assembly"/>
    <property type="evidence" value="ECO:0000314"/>
    <property type="project" value="UniProtKB"/>
</dbReference>
<dbReference type="GO" id="GO:0032878">
    <property type="term" value="P:regulation of establishment or maintenance of cell polarity"/>
    <property type="evidence" value="ECO:0000318"/>
    <property type="project" value="GO_Central"/>
</dbReference>
<dbReference type="GO" id="GO:0008593">
    <property type="term" value="P:regulation of Notch signaling pathway"/>
    <property type="evidence" value="ECO:0000318"/>
    <property type="project" value="GO_Central"/>
</dbReference>
<dbReference type="FunFam" id="2.130.10.10:FF:001437">
    <property type="entry name" value="LLGL scribble cell polarity complex component 1"/>
    <property type="match status" value="1"/>
</dbReference>
<dbReference type="Gene3D" id="2.130.10.10">
    <property type="entry name" value="YVTN repeat-like/Quinoprotein amine dehydrogenase"/>
    <property type="match status" value="1"/>
</dbReference>
<dbReference type="InterPro" id="IPR000664">
    <property type="entry name" value="Lethal2_giant"/>
</dbReference>
<dbReference type="InterPro" id="IPR013577">
    <property type="entry name" value="LLGL2"/>
</dbReference>
<dbReference type="InterPro" id="IPR015943">
    <property type="entry name" value="WD40/YVTN_repeat-like_dom_sf"/>
</dbReference>
<dbReference type="InterPro" id="IPR036322">
    <property type="entry name" value="WD40_repeat_dom_sf"/>
</dbReference>
<dbReference type="InterPro" id="IPR001680">
    <property type="entry name" value="WD40_rpt"/>
</dbReference>
<dbReference type="PANTHER" id="PTHR10241">
    <property type="entry name" value="LETHAL 2 GIANT LARVAE PROTEIN"/>
    <property type="match status" value="1"/>
</dbReference>
<dbReference type="PANTHER" id="PTHR10241:SF21">
    <property type="entry name" value="LETHAL(2) GIANT LARVAE PROTEIN HOMOLOG 1"/>
    <property type="match status" value="1"/>
</dbReference>
<dbReference type="Pfam" id="PF08366">
    <property type="entry name" value="LLGL"/>
    <property type="match status" value="1"/>
</dbReference>
<dbReference type="PRINTS" id="PR00962">
    <property type="entry name" value="LETHAL2GIANT"/>
</dbReference>
<dbReference type="SMART" id="SM00320">
    <property type="entry name" value="WD40"/>
    <property type="match status" value="5"/>
</dbReference>
<dbReference type="SUPFAM" id="SSF50978">
    <property type="entry name" value="WD40 repeat-like"/>
    <property type="match status" value="1"/>
</dbReference>
<dbReference type="PROSITE" id="PS00678">
    <property type="entry name" value="WD_REPEATS_1"/>
    <property type="match status" value="2"/>
</dbReference>
<dbReference type="PROSITE" id="PS50082">
    <property type="entry name" value="WD_REPEATS_2"/>
    <property type="match status" value="1"/>
</dbReference>